<reference key="1">
    <citation type="journal article" date="2006" name="PLoS Genet.">
        <title>Comparative genomics of emerging human ehrlichiosis agents.</title>
        <authorList>
            <person name="Dunning Hotopp J.C."/>
            <person name="Lin M."/>
            <person name="Madupu R."/>
            <person name="Crabtree J."/>
            <person name="Angiuoli S.V."/>
            <person name="Eisen J.A."/>
            <person name="Seshadri R."/>
            <person name="Ren Q."/>
            <person name="Wu M."/>
            <person name="Utterback T.R."/>
            <person name="Smith S."/>
            <person name="Lewis M."/>
            <person name="Khouri H."/>
            <person name="Zhang C."/>
            <person name="Niu H."/>
            <person name="Lin Q."/>
            <person name="Ohashi N."/>
            <person name="Zhi N."/>
            <person name="Nelson W.C."/>
            <person name="Brinkac L.M."/>
            <person name="Dodson R.J."/>
            <person name="Rosovitz M.J."/>
            <person name="Sundaram J.P."/>
            <person name="Daugherty S.C."/>
            <person name="Davidsen T."/>
            <person name="Durkin A.S."/>
            <person name="Gwinn M.L."/>
            <person name="Haft D.H."/>
            <person name="Selengut J.D."/>
            <person name="Sullivan S.A."/>
            <person name="Zafar N."/>
            <person name="Zhou L."/>
            <person name="Benahmed F."/>
            <person name="Forberger H."/>
            <person name="Halpin R."/>
            <person name="Mulligan S."/>
            <person name="Robinson J."/>
            <person name="White O."/>
            <person name="Rikihisa Y."/>
            <person name="Tettelin H."/>
        </authorList>
    </citation>
    <scope>NUCLEOTIDE SEQUENCE [LARGE SCALE GENOMIC DNA]</scope>
    <source>
        <strain>ATCC VR-367 / Miyayama</strain>
    </source>
</reference>
<sequence>MAGEIAIGIDLGTTNSCVAIKDKVIENAEGARTTPSVVAFTSDGQTLVGAPAQRQAVTNAKNTIVASKRLIGRRFKDNVIKGIQRDYPYKIIEAKNGDAWIEAGGKSYSPSQIGANVLIKLKEAAETYTGKKVTKAVITVPAYFDDAQRQATKDAGRIAGLEVLRIINEPTAAALAYGLDKTATTKNIAVFDLGGGTFDVSILELGDGVFEVKATNGDTHLGGEDFDRMILNFLVEEFKKENGMDLKNDPLALQRLKEAAEKAKKELSSTQETDINLPYITADAAGPKHLNVKFTRAKLESLVSDLIDRTIEPCKKALKDSGLKREEINEVVLVGGMTRMPAVVKKVTEFFGKEPHKGVNPDEVVAIGAAIQANILAGGSDAQDIVLLDVTPLSLGIETLGGVFTKLIDRNTTIPTKRSQTFSTAEDNQSAVTIRVFQGERQMASDNKLLGQFSLEGIPPAPRGMPQIEVTFDIDANGIVHVSAKDKGTGKEQTVKIQASGGLTEEEIKKMVDEAASKADEDKKRRELVEAKNSAESLIHSTEKSLSEYGSKISSSDKQSIDDAISDLKSVLAKDDASLIKEKTDALSKVSMKLGEAMYKESQSASNDPSPKNDSTEEGERVVDPEYEEVKDEDSK</sequence>
<dbReference type="EMBL" id="CP000237">
    <property type="protein sequence ID" value="ABD46235.1"/>
    <property type="molecule type" value="Genomic_DNA"/>
</dbReference>
<dbReference type="RefSeq" id="WP_011451428.1">
    <property type="nucleotide sequence ID" value="NC_007798.1"/>
</dbReference>
<dbReference type="SMR" id="Q2GF34"/>
<dbReference type="STRING" id="222891.NSE_0019"/>
<dbReference type="KEGG" id="nse:NSE_0019"/>
<dbReference type="eggNOG" id="COG0443">
    <property type="taxonomic scope" value="Bacteria"/>
</dbReference>
<dbReference type="HOGENOM" id="CLU_005965_2_1_5"/>
<dbReference type="OrthoDB" id="9766019at2"/>
<dbReference type="Proteomes" id="UP000001942">
    <property type="component" value="Chromosome"/>
</dbReference>
<dbReference type="GO" id="GO:0005524">
    <property type="term" value="F:ATP binding"/>
    <property type="evidence" value="ECO:0007669"/>
    <property type="project" value="UniProtKB-UniRule"/>
</dbReference>
<dbReference type="GO" id="GO:0140662">
    <property type="term" value="F:ATP-dependent protein folding chaperone"/>
    <property type="evidence" value="ECO:0007669"/>
    <property type="project" value="InterPro"/>
</dbReference>
<dbReference type="GO" id="GO:0051082">
    <property type="term" value="F:unfolded protein binding"/>
    <property type="evidence" value="ECO:0007669"/>
    <property type="project" value="InterPro"/>
</dbReference>
<dbReference type="FunFam" id="2.60.34.10:FF:000014">
    <property type="entry name" value="Chaperone protein DnaK HSP70"/>
    <property type="match status" value="1"/>
</dbReference>
<dbReference type="FunFam" id="3.30.420.40:FF:000020">
    <property type="entry name" value="Chaperone protein HscA homolog"/>
    <property type="match status" value="1"/>
</dbReference>
<dbReference type="FunFam" id="1.20.1270.10:FF:000001">
    <property type="entry name" value="Molecular chaperone DnaK"/>
    <property type="match status" value="1"/>
</dbReference>
<dbReference type="FunFam" id="3.30.420.40:FF:000004">
    <property type="entry name" value="Molecular chaperone DnaK"/>
    <property type="match status" value="1"/>
</dbReference>
<dbReference type="FunFam" id="3.90.640.10:FF:000003">
    <property type="entry name" value="Molecular chaperone DnaK"/>
    <property type="match status" value="1"/>
</dbReference>
<dbReference type="Gene3D" id="1.20.1270.10">
    <property type="match status" value="1"/>
</dbReference>
<dbReference type="Gene3D" id="3.30.420.40">
    <property type="match status" value="2"/>
</dbReference>
<dbReference type="Gene3D" id="3.90.640.10">
    <property type="entry name" value="Actin, Chain A, domain 4"/>
    <property type="match status" value="1"/>
</dbReference>
<dbReference type="Gene3D" id="2.60.34.10">
    <property type="entry name" value="Substrate Binding Domain Of DNAk, Chain A, domain 1"/>
    <property type="match status" value="1"/>
</dbReference>
<dbReference type="HAMAP" id="MF_00332">
    <property type="entry name" value="DnaK"/>
    <property type="match status" value="1"/>
</dbReference>
<dbReference type="InterPro" id="IPR043129">
    <property type="entry name" value="ATPase_NBD"/>
</dbReference>
<dbReference type="InterPro" id="IPR012725">
    <property type="entry name" value="Chaperone_DnaK"/>
</dbReference>
<dbReference type="InterPro" id="IPR018181">
    <property type="entry name" value="Heat_shock_70_CS"/>
</dbReference>
<dbReference type="InterPro" id="IPR029048">
    <property type="entry name" value="HSP70_C_sf"/>
</dbReference>
<dbReference type="InterPro" id="IPR029047">
    <property type="entry name" value="HSP70_peptide-bd_sf"/>
</dbReference>
<dbReference type="InterPro" id="IPR013126">
    <property type="entry name" value="Hsp_70_fam"/>
</dbReference>
<dbReference type="NCBIfam" id="NF001413">
    <property type="entry name" value="PRK00290.1"/>
    <property type="match status" value="1"/>
</dbReference>
<dbReference type="NCBIfam" id="NF003520">
    <property type="entry name" value="PRK05183.1"/>
    <property type="match status" value="1"/>
</dbReference>
<dbReference type="NCBIfam" id="TIGR02350">
    <property type="entry name" value="prok_dnaK"/>
    <property type="match status" value="1"/>
</dbReference>
<dbReference type="PANTHER" id="PTHR19375">
    <property type="entry name" value="HEAT SHOCK PROTEIN 70KDA"/>
    <property type="match status" value="1"/>
</dbReference>
<dbReference type="Pfam" id="PF00012">
    <property type="entry name" value="HSP70"/>
    <property type="match status" value="1"/>
</dbReference>
<dbReference type="PRINTS" id="PR00301">
    <property type="entry name" value="HEATSHOCK70"/>
</dbReference>
<dbReference type="SUPFAM" id="SSF53067">
    <property type="entry name" value="Actin-like ATPase domain"/>
    <property type="match status" value="2"/>
</dbReference>
<dbReference type="SUPFAM" id="SSF100934">
    <property type="entry name" value="Heat shock protein 70kD (HSP70), C-terminal subdomain"/>
    <property type="match status" value="1"/>
</dbReference>
<dbReference type="SUPFAM" id="SSF100920">
    <property type="entry name" value="Heat shock protein 70kD (HSP70), peptide-binding domain"/>
    <property type="match status" value="1"/>
</dbReference>
<dbReference type="PROSITE" id="PS00297">
    <property type="entry name" value="HSP70_1"/>
    <property type="match status" value="1"/>
</dbReference>
<dbReference type="PROSITE" id="PS00329">
    <property type="entry name" value="HSP70_2"/>
    <property type="match status" value="1"/>
</dbReference>
<dbReference type="PROSITE" id="PS01036">
    <property type="entry name" value="HSP70_3"/>
    <property type="match status" value="1"/>
</dbReference>
<protein>
    <recommendedName>
        <fullName evidence="1">Chaperone protein DnaK</fullName>
    </recommendedName>
    <alternativeName>
        <fullName evidence="1">HSP70</fullName>
    </alternativeName>
    <alternativeName>
        <fullName evidence="1">Heat shock 70 kDa protein</fullName>
    </alternativeName>
    <alternativeName>
        <fullName evidence="1">Heat shock protein 70</fullName>
    </alternativeName>
</protein>
<evidence type="ECO:0000255" key="1">
    <source>
        <dbReference type="HAMAP-Rule" id="MF_00332"/>
    </source>
</evidence>
<evidence type="ECO:0000256" key="2">
    <source>
        <dbReference type="SAM" id="MobiDB-lite"/>
    </source>
</evidence>
<keyword id="KW-0067">ATP-binding</keyword>
<keyword id="KW-0143">Chaperone</keyword>
<keyword id="KW-0547">Nucleotide-binding</keyword>
<keyword id="KW-0597">Phosphoprotein</keyword>
<keyword id="KW-0346">Stress response</keyword>
<name>DNAK_NEOSM</name>
<comment type="function">
    <text evidence="1">Acts as a chaperone.</text>
</comment>
<comment type="induction">
    <text evidence="1">By stress conditions e.g. heat shock.</text>
</comment>
<comment type="similarity">
    <text evidence="1">Belongs to the heat shock protein 70 family.</text>
</comment>
<organism>
    <name type="scientific">Neorickettsia sennetsu (strain ATCC VR-367 / Miyayama)</name>
    <name type="common">Ehrlichia sennetsu</name>
    <dbReference type="NCBI Taxonomy" id="222891"/>
    <lineage>
        <taxon>Bacteria</taxon>
        <taxon>Pseudomonadati</taxon>
        <taxon>Pseudomonadota</taxon>
        <taxon>Alphaproteobacteria</taxon>
        <taxon>Rickettsiales</taxon>
        <taxon>Anaplasmataceae</taxon>
        <taxon>Neorickettsia</taxon>
    </lineage>
</organism>
<gene>
    <name evidence="1" type="primary">dnaK</name>
    <name type="ordered locus">NSE_0019</name>
</gene>
<feature type="chain" id="PRO_1000059615" description="Chaperone protein DnaK">
    <location>
        <begin position="1"/>
        <end position="636"/>
    </location>
</feature>
<feature type="region of interest" description="Disordered" evidence="2">
    <location>
        <begin position="514"/>
        <end position="542"/>
    </location>
</feature>
<feature type="region of interest" description="Disordered" evidence="2">
    <location>
        <begin position="598"/>
        <end position="636"/>
    </location>
</feature>
<feature type="compositionally biased region" description="Basic and acidic residues" evidence="2">
    <location>
        <begin position="514"/>
        <end position="530"/>
    </location>
</feature>
<feature type="compositionally biased region" description="Polar residues" evidence="2">
    <location>
        <begin position="601"/>
        <end position="613"/>
    </location>
</feature>
<feature type="compositionally biased region" description="Basic and acidic residues" evidence="2">
    <location>
        <begin position="614"/>
        <end position="624"/>
    </location>
</feature>
<feature type="compositionally biased region" description="Acidic residues" evidence="2">
    <location>
        <begin position="625"/>
        <end position="636"/>
    </location>
</feature>
<feature type="modified residue" description="Phosphothreonine; by autocatalysis" evidence="1">
    <location>
        <position position="197"/>
    </location>
</feature>
<proteinExistence type="inferred from homology"/>
<accession>Q2GF34</accession>